<reference key="1">
    <citation type="journal article" date="1996" name="Science">
        <title>Complete genome sequence of the methanogenic archaeon, Methanococcus jannaschii.</title>
        <authorList>
            <person name="Bult C.J."/>
            <person name="White O."/>
            <person name="Olsen G.J."/>
            <person name="Zhou L."/>
            <person name="Fleischmann R.D."/>
            <person name="Sutton G.G."/>
            <person name="Blake J.A."/>
            <person name="FitzGerald L.M."/>
            <person name="Clayton R.A."/>
            <person name="Gocayne J.D."/>
            <person name="Kerlavage A.R."/>
            <person name="Dougherty B.A."/>
            <person name="Tomb J.-F."/>
            <person name="Adams M.D."/>
            <person name="Reich C.I."/>
            <person name="Overbeek R."/>
            <person name="Kirkness E.F."/>
            <person name="Weinstock K.G."/>
            <person name="Merrick J.M."/>
            <person name="Glodek A."/>
            <person name="Scott J.L."/>
            <person name="Geoghagen N.S.M."/>
            <person name="Weidman J.F."/>
            <person name="Fuhrmann J.L."/>
            <person name="Nguyen D."/>
            <person name="Utterback T.R."/>
            <person name="Kelley J.M."/>
            <person name="Peterson J.D."/>
            <person name="Sadow P.W."/>
            <person name="Hanna M.C."/>
            <person name="Cotton M.D."/>
            <person name="Roberts K.M."/>
            <person name="Hurst M.A."/>
            <person name="Kaine B.P."/>
            <person name="Borodovsky M."/>
            <person name="Klenk H.-P."/>
            <person name="Fraser C.M."/>
            <person name="Smith H.O."/>
            <person name="Woese C.R."/>
            <person name="Venter J.C."/>
        </authorList>
    </citation>
    <scope>NUCLEOTIDE SEQUENCE [LARGE SCALE GENOMIC DNA]</scope>
    <source>
        <strain>ATCC 43067 / DSM 2661 / JAL-1 / JCM 10045 / NBRC 100440</strain>
    </source>
</reference>
<proteinExistence type="inferred from homology"/>
<gene>
    <name type="primary">ppsA</name>
    <name type="ordered locus">MJ0542</name>
</gene>
<feature type="chain" id="PRO_0000023556" description="Probable phosphoenolpyruvate synthase, 1st part" evidence="2">
    <location>
        <begin position="1"/>
        <end position="410"/>
    </location>
</feature>
<feature type="chain" id="PRO_0000023557" description="Mja pep intein" evidence="2">
    <location>
        <begin position="411"/>
        <end position="822"/>
    </location>
</feature>
<feature type="chain" id="PRO_0000023558" description="Probable phosphoenolpyruvate synthase, 2nd part" evidence="2">
    <location>
        <begin position="823"/>
        <end position="1188"/>
    </location>
</feature>
<feature type="domain" description="DOD-type homing endonuclease" evidence="3">
    <location>
        <begin position="536"/>
        <end position="670"/>
    </location>
</feature>
<feature type="active site" description="Tele-phosphohistidine intermediate" evidence="1">
    <location>
        <position position="824"/>
    </location>
</feature>
<feature type="active site" description="Proton donor" evidence="1">
    <location>
        <position position="1133"/>
    </location>
</feature>
<feature type="binding site" evidence="1">
    <location>
        <position position="917"/>
    </location>
    <ligand>
        <name>substrate</name>
    </ligand>
</feature>
<feature type="binding site" evidence="1">
    <location>
        <position position="964"/>
    </location>
    <ligand>
        <name>substrate</name>
    </ligand>
</feature>
<feature type="binding site" evidence="1">
    <location>
        <position position="1061"/>
    </location>
    <ligand>
        <name>Mg(2+)</name>
        <dbReference type="ChEBI" id="CHEBI:18420"/>
    </ligand>
</feature>
<feature type="binding site" evidence="1">
    <location>
        <position position="1061"/>
    </location>
    <ligand>
        <name>substrate</name>
    </ligand>
</feature>
<feature type="binding site" evidence="1">
    <location>
        <position position="1083"/>
    </location>
    <ligand>
        <name>substrate</name>
    </ligand>
</feature>
<feature type="binding site" evidence="1">
    <location>
        <position position="1084"/>
    </location>
    <ligand>
        <name>substrate</name>
    </ligand>
</feature>
<feature type="binding site" evidence="1">
    <location>
        <position position="1085"/>
    </location>
    <ligand>
        <name>substrate</name>
    </ligand>
</feature>
<feature type="binding site" evidence="1">
    <location>
        <position position="1086"/>
    </location>
    <ligand>
        <name>Mg(2+)</name>
        <dbReference type="ChEBI" id="CHEBI:18420"/>
    </ligand>
</feature>
<feature type="binding site" evidence="1">
    <location>
        <position position="1086"/>
    </location>
    <ligand>
        <name>substrate</name>
    </ligand>
</feature>
<dbReference type="EC" id="2.7.9.2"/>
<dbReference type="EMBL" id="L77117">
    <property type="protein sequence ID" value="AAB98534.1"/>
    <property type="molecule type" value="Genomic_DNA"/>
</dbReference>
<dbReference type="PIR" id="F64367">
    <property type="entry name" value="F64367"/>
</dbReference>
<dbReference type="SMR" id="Q57962"/>
<dbReference type="FunCoup" id="Q57962">
    <property type="interactions" value="94"/>
</dbReference>
<dbReference type="STRING" id="243232.MJ_0542"/>
<dbReference type="PaxDb" id="243232-MJ_0542"/>
<dbReference type="EnsemblBacteria" id="AAB98534">
    <property type="protein sequence ID" value="AAB98534"/>
    <property type="gene ID" value="MJ_0542"/>
</dbReference>
<dbReference type="KEGG" id="mja:MJ_0542"/>
<dbReference type="eggNOG" id="arCOG01111">
    <property type="taxonomic scope" value="Archaea"/>
</dbReference>
<dbReference type="HOGENOM" id="CLU_007308_6_1_2"/>
<dbReference type="InParanoid" id="Q57962"/>
<dbReference type="UniPathway" id="UPA00138"/>
<dbReference type="Proteomes" id="UP000000805">
    <property type="component" value="Chromosome"/>
</dbReference>
<dbReference type="GO" id="GO:0005524">
    <property type="term" value="F:ATP binding"/>
    <property type="evidence" value="ECO:0007669"/>
    <property type="project" value="UniProtKB-KW"/>
</dbReference>
<dbReference type="GO" id="GO:0004519">
    <property type="term" value="F:endonuclease activity"/>
    <property type="evidence" value="ECO:0007669"/>
    <property type="project" value="InterPro"/>
</dbReference>
<dbReference type="GO" id="GO:0046872">
    <property type="term" value="F:metal ion binding"/>
    <property type="evidence" value="ECO:0007669"/>
    <property type="project" value="UniProtKB-KW"/>
</dbReference>
<dbReference type="GO" id="GO:0008986">
    <property type="term" value="F:pyruvate, water dikinase activity"/>
    <property type="evidence" value="ECO:0007669"/>
    <property type="project" value="UniProtKB-EC"/>
</dbReference>
<dbReference type="GO" id="GO:0006094">
    <property type="term" value="P:gluconeogenesis"/>
    <property type="evidence" value="ECO:0007669"/>
    <property type="project" value="UniProtKB-UniPathway"/>
</dbReference>
<dbReference type="GO" id="GO:0016539">
    <property type="term" value="P:intein-mediated protein splicing"/>
    <property type="evidence" value="ECO:0007669"/>
    <property type="project" value="InterPro"/>
</dbReference>
<dbReference type="CDD" id="cd00081">
    <property type="entry name" value="Hint"/>
    <property type="match status" value="1"/>
</dbReference>
<dbReference type="FunFam" id="3.30.1490.20:FF:000010">
    <property type="entry name" value="Phosphoenolpyruvate synthase"/>
    <property type="match status" value="1"/>
</dbReference>
<dbReference type="Gene3D" id="3.30.1490.20">
    <property type="entry name" value="ATP-grasp fold, A domain"/>
    <property type="match status" value="1"/>
</dbReference>
<dbReference type="Gene3D" id="3.30.470.20">
    <property type="entry name" value="ATP-grasp fold, B domain"/>
    <property type="match status" value="1"/>
</dbReference>
<dbReference type="Gene3D" id="2.170.16.10">
    <property type="entry name" value="Hedgehog/Intein (Hint) domain"/>
    <property type="match status" value="1"/>
</dbReference>
<dbReference type="Gene3D" id="3.10.28.10">
    <property type="entry name" value="Homing endonucleases"/>
    <property type="match status" value="1"/>
</dbReference>
<dbReference type="Gene3D" id="3.20.20.60">
    <property type="entry name" value="Phosphoenolpyruvate-binding domains"/>
    <property type="match status" value="1"/>
</dbReference>
<dbReference type="Gene3D" id="3.50.30.10">
    <property type="entry name" value="Phosphohistidine domain"/>
    <property type="match status" value="2"/>
</dbReference>
<dbReference type="InterPro" id="IPR013815">
    <property type="entry name" value="ATP_grasp_subdomain_1"/>
</dbReference>
<dbReference type="InterPro" id="IPR003587">
    <property type="entry name" value="Hint_dom_N"/>
</dbReference>
<dbReference type="InterPro" id="IPR036844">
    <property type="entry name" value="Hint_dom_sf"/>
</dbReference>
<dbReference type="InterPro" id="IPR027434">
    <property type="entry name" value="Homing_endonucl"/>
</dbReference>
<dbReference type="InterPro" id="IPR030934">
    <property type="entry name" value="Intein_C"/>
</dbReference>
<dbReference type="InterPro" id="IPR004042">
    <property type="entry name" value="Intein_endonuc_central"/>
</dbReference>
<dbReference type="InterPro" id="IPR006141">
    <property type="entry name" value="Intein_N"/>
</dbReference>
<dbReference type="InterPro" id="IPR004860">
    <property type="entry name" value="LAGLIDADG_dom"/>
</dbReference>
<dbReference type="InterPro" id="IPR008279">
    <property type="entry name" value="PEP-util_enz_mobile_dom"/>
</dbReference>
<dbReference type="InterPro" id="IPR006319">
    <property type="entry name" value="PEP_synth"/>
</dbReference>
<dbReference type="InterPro" id="IPR000121">
    <property type="entry name" value="PEP_util_C"/>
</dbReference>
<dbReference type="InterPro" id="IPR023151">
    <property type="entry name" value="PEP_util_CS"/>
</dbReference>
<dbReference type="InterPro" id="IPR036637">
    <property type="entry name" value="Phosphohistidine_dom_sf"/>
</dbReference>
<dbReference type="InterPro" id="IPR002192">
    <property type="entry name" value="PPDK_AMP/ATP-bd"/>
</dbReference>
<dbReference type="InterPro" id="IPR015813">
    <property type="entry name" value="Pyrv/PenolPyrv_kinase-like_dom"/>
</dbReference>
<dbReference type="InterPro" id="IPR040442">
    <property type="entry name" value="Pyrv_kinase-like_dom_sf"/>
</dbReference>
<dbReference type="NCBIfam" id="TIGR01443">
    <property type="entry name" value="intein_Cterm"/>
    <property type="match status" value="1"/>
</dbReference>
<dbReference type="NCBIfam" id="TIGR01445">
    <property type="entry name" value="intein_Nterm"/>
    <property type="match status" value="1"/>
</dbReference>
<dbReference type="PANTHER" id="PTHR43030">
    <property type="entry name" value="PHOSPHOENOLPYRUVATE SYNTHASE"/>
    <property type="match status" value="1"/>
</dbReference>
<dbReference type="PANTHER" id="PTHR43030:SF1">
    <property type="entry name" value="PHOSPHOENOLPYRUVATE SYNTHASE"/>
    <property type="match status" value="1"/>
</dbReference>
<dbReference type="Pfam" id="PF14528">
    <property type="entry name" value="LAGLIDADG_3"/>
    <property type="match status" value="1"/>
</dbReference>
<dbReference type="Pfam" id="PF00391">
    <property type="entry name" value="PEP-utilizers"/>
    <property type="match status" value="2"/>
</dbReference>
<dbReference type="Pfam" id="PF02896">
    <property type="entry name" value="PEP-utilizers_C"/>
    <property type="match status" value="1"/>
</dbReference>
<dbReference type="Pfam" id="PF01326">
    <property type="entry name" value="PPDK_N"/>
    <property type="match status" value="1"/>
</dbReference>
<dbReference type="PRINTS" id="PR01736">
    <property type="entry name" value="PHPHTRNFRASE"/>
</dbReference>
<dbReference type="SMART" id="SM00306">
    <property type="entry name" value="HintN"/>
    <property type="match status" value="1"/>
</dbReference>
<dbReference type="SUPFAM" id="SSF56059">
    <property type="entry name" value="Glutathione synthetase ATP-binding domain-like"/>
    <property type="match status" value="1"/>
</dbReference>
<dbReference type="SUPFAM" id="SSF51294">
    <property type="entry name" value="Hedgehog/intein (Hint) domain"/>
    <property type="match status" value="1"/>
</dbReference>
<dbReference type="SUPFAM" id="SSF55608">
    <property type="entry name" value="Homing endonucleases"/>
    <property type="match status" value="1"/>
</dbReference>
<dbReference type="SUPFAM" id="SSF51621">
    <property type="entry name" value="Phosphoenolpyruvate/pyruvate domain"/>
    <property type="match status" value="1"/>
</dbReference>
<dbReference type="SUPFAM" id="SSF52009">
    <property type="entry name" value="Phosphohistidine domain"/>
    <property type="match status" value="1"/>
</dbReference>
<dbReference type="PROSITE" id="PS50818">
    <property type="entry name" value="INTEIN_C_TER"/>
    <property type="match status" value="1"/>
</dbReference>
<dbReference type="PROSITE" id="PS50819">
    <property type="entry name" value="INTEIN_ENDONUCLEASE"/>
    <property type="match status" value="1"/>
</dbReference>
<dbReference type="PROSITE" id="PS50817">
    <property type="entry name" value="INTEIN_N_TER"/>
    <property type="match status" value="1"/>
</dbReference>
<dbReference type="PROSITE" id="PS00742">
    <property type="entry name" value="PEP_ENZYMES_2"/>
    <property type="match status" value="1"/>
</dbReference>
<evidence type="ECO:0000250" key="1"/>
<evidence type="ECO:0000255" key="2"/>
<evidence type="ECO:0000255" key="3">
    <source>
        <dbReference type="PROSITE-ProRule" id="PRU00273"/>
    </source>
</evidence>
<evidence type="ECO:0000305" key="4"/>
<sequence length="1188" mass="134012">MLIIQNTKGDSMKFIAWLDELSNKDVDIAGGKGASLGEMWNAGLPVPPAFVVTADAYRHFIKETGLMDKIREILSGLDVNDTDALTNASKKIRKLIEEAEMPEDLRLAIIEAYNKLCEMCGEDEVTVAVRSSATAEDLPEASFAGQQDTYLNIKGAENVVKYVQKCFSSLFTPRAIFYREQQGFDHFKVALAAVVQKLVNAEKAGVMFTVNPISENYDELVIEAAWGLGEGVVSGSVSPDTYIVNKKTLEIVDKHIARKETMFVKDEKGETKVVEVPDDMKEKQVLSDDEIKELAKIGLNIEKHYGKPMDVEWAYEKGKFYMLQARPITTLKKGKKEKKAKEEDIEAKILLKGIGASPGIATGVVKIIHDVSEIDKVKEGDILVTEMTTPDMVPAMKKAAAIVTDEGGLTCIEGDAKILTDRGFLKMKEVYKLVKNGEKLKVLGLNAETLKTEWKEIIDAQKREARRYEIGVYRKNKNTKDTIKITPDHKFPVFVNGELSKVQLCDIIDNNLSVLSIDYIPMIEEKYESLAEVMYLGGAVLSDGHIVRRNGKPIRVRFTQKDTEEKKDFIEKVKGDVKLIGGNFIEISNRNNVIEYQTSRKIPSEILGFIEVNINTIPLYATKDEIADLIAGFVDGDGCLSGKRRVEIYQNSSHIKKIEGLIVGLYRLGIIPRLRYKRSSTATIYFNNNLETILQRTRRIKLDKLKEFKKPVEDKKLIDISQILPELKEFDYKGYLYKTYKEKLFIGINKLEEYLSKIDKDGIERIKQKIKLLKESDIYSIRIKKVGEDYGEVYNITVKAENEFNHNYVVWTKHYTPIVVFNCHAAIVSRELGTPCVVGTKKATKVLKDGMIVTVDGEKGIVYEGEIKKVEEKEKKQEVVVQQAPIITATEVKVNVSMPEVAERAAATGADGVGLLRAEHMILGLGKHPRKILEEEGEEALIEALMEGIRKVADAFYPRPVTYRTLDAPTDEFRGLEGGENEPIEHNPMLGWRGIRRDLDEVDILKCELKAIKRLREEGYKNIEIMIPLVTHPDEVRRVKEIMREVGLEPCKDIPFGIMVETPAAALIIEDFIKEGINFVSLGTNDLTQYTIAIDRNNELVSKYYKEDHPAVLKLVEHVIKTCKKHGIKTSICGQAGSRPHIVEKLVEWGIDSVSANIDAVETIRRVVARTEQKVILNYIRKSYVERE</sequence>
<comment type="function">
    <text evidence="1">Catalyzes the phosphorylation of pyruvate to phosphoenolpyruvate.</text>
</comment>
<comment type="catalytic activity">
    <reaction>
        <text>pyruvate + ATP + H2O = phosphoenolpyruvate + AMP + phosphate + 2 H(+)</text>
        <dbReference type="Rhea" id="RHEA:11364"/>
        <dbReference type="ChEBI" id="CHEBI:15361"/>
        <dbReference type="ChEBI" id="CHEBI:15377"/>
        <dbReference type="ChEBI" id="CHEBI:15378"/>
        <dbReference type="ChEBI" id="CHEBI:30616"/>
        <dbReference type="ChEBI" id="CHEBI:43474"/>
        <dbReference type="ChEBI" id="CHEBI:58702"/>
        <dbReference type="ChEBI" id="CHEBI:456215"/>
        <dbReference type="EC" id="2.7.9.2"/>
    </reaction>
</comment>
<comment type="cofactor">
    <cofactor evidence="1">
        <name>Mg(2+)</name>
        <dbReference type="ChEBI" id="CHEBI:18420"/>
    </cofactor>
</comment>
<comment type="pathway">
    <text>Carbohydrate biosynthesis; gluconeogenesis.</text>
</comment>
<comment type="domain">
    <text evidence="1">The N-terminal domain contains the ATP/Pi binding site, the central domain the pyrophosphate/phosphate carrier histidine, and the C-terminal domain the pyruvate binding site.</text>
</comment>
<comment type="PTM">
    <text evidence="4">This protein undergoes a protein self splicing that involves a post-translational excision of the intervening region (intein) followed by peptide ligation.</text>
</comment>
<comment type="miscellaneous">
    <text evidence="1">The reaction takes place in three steps, mediated by a phosphocarrier histidine residue located on the surface of the central domain. The two first partial reactions are catalyzed at an active site located on the N-terminal domain, and the third partial reaction is catalyzed at an active site located on the C-terminal domain. For catalytic turnover, the central domain swivels from the concave surface of the N-terminal domain to that of the C-terminal domain (By similarity).</text>
</comment>
<comment type="similarity">
    <text evidence="4">Belongs to the PEP-utilizing enzyme family.</text>
</comment>
<keyword id="KW-0067">ATP-binding</keyword>
<keyword id="KW-0068">Autocatalytic cleavage</keyword>
<keyword id="KW-0418">Kinase</keyword>
<keyword id="KW-0460">Magnesium</keyword>
<keyword id="KW-0479">Metal-binding</keyword>
<keyword id="KW-0547">Nucleotide-binding</keyword>
<keyword id="KW-0597">Phosphoprotein</keyword>
<keyword id="KW-0651">Protein splicing</keyword>
<keyword id="KW-1185">Reference proteome</keyword>
<keyword id="KW-0808">Transferase</keyword>
<organism>
    <name type="scientific">Methanocaldococcus jannaschii (strain ATCC 43067 / DSM 2661 / JAL-1 / JCM 10045 / NBRC 100440)</name>
    <name type="common">Methanococcus jannaschii</name>
    <dbReference type="NCBI Taxonomy" id="243232"/>
    <lineage>
        <taxon>Archaea</taxon>
        <taxon>Methanobacteriati</taxon>
        <taxon>Methanobacteriota</taxon>
        <taxon>Methanomada group</taxon>
        <taxon>Methanococci</taxon>
        <taxon>Methanococcales</taxon>
        <taxon>Methanocaldococcaceae</taxon>
        <taxon>Methanocaldococcus</taxon>
    </lineage>
</organism>
<name>PPSA_METJA</name>
<protein>
    <recommendedName>
        <fullName>Probable phosphoenolpyruvate synthase</fullName>
        <shortName>PEP synthase</shortName>
        <ecNumber>2.7.9.2</ecNumber>
    </recommendedName>
    <alternativeName>
        <fullName>Pyruvate, water dikinase</fullName>
    </alternativeName>
    <component>
        <recommendedName>
            <fullName>Mja pep intein</fullName>
        </recommendedName>
        <alternativeName>
            <fullName>Mja pepA intein</fullName>
        </alternativeName>
    </component>
</protein>
<accession>Q57962</accession>